<feature type="chain" id="PRO_0000418663" description="Galactinol synthase 7">
    <location>
        <begin position="1"/>
        <end position="332"/>
    </location>
</feature>
<feature type="active site" evidence="1">
    <location>
        <position position="101"/>
    </location>
</feature>
<feature type="binding site" evidence="1">
    <location>
        <position position="117"/>
    </location>
    <ligand>
        <name>Mn(2+)</name>
        <dbReference type="ChEBI" id="CHEBI:29035"/>
    </ligand>
</feature>
<feature type="binding site" evidence="1">
    <location>
        <position position="119"/>
    </location>
    <ligand>
        <name>Mn(2+)</name>
        <dbReference type="ChEBI" id="CHEBI:29035"/>
    </ligand>
</feature>
<feature type="binding site" evidence="1">
    <location>
        <position position="255"/>
    </location>
    <ligand>
        <name>Mn(2+)</name>
        <dbReference type="ChEBI" id="CHEBI:29035"/>
    </ligand>
</feature>
<sequence length="332" mass="37768">MTPETHVDMINASEKAPKERAYVTFLAGNGDYVKGVVGLAKGLRKVKSAYPLVVAMLPDVPEEHREILRSQGCIVREIEPVHPPDSQDAYARAYYIINYSKLRIWNFEEYNKMIYLDADIQVFGNIDDLFDMQDGYLHGVLSCFCEKIWSYTPLYSIGYCQYCPEKVVWPAEMESAPPSPYFNAGMFVFEPNPLTYESLLQTLQVTPPTPFAEQDFLNMFFGKVFKPVSPVYNLILSVLWRHPGKVDLESVKVVHYCPPGSKPWRYTGEEPNMDREDVKMLIKKWWDIYNDESLDFKPKSPADLEATVLESTIIASVTEAPLSYSPAAPSAA</sequence>
<name>GOLS7_ARATH</name>
<accession>Q4PSY4</accession>
<accession>O80766</accession>
<keyword id="KW-0119">Carbohydrate metabolism</keyword>
<keyword id="KW-0963">Cytoplasm</keyword>
<keyword id="KW-0299">Galactose metabolism</keyword>
<keyword id="KW-0328">Glycosyltransferase</keyword>
<keyword id="KW-0464">Manganese</keyword>
<keyword id="KW-0479">Metal-binding</keyword>
<keyword id="KW-1185">Reference proteome</keyword>
<keyword id="KW-0808">Transferase</keyword>
<protein>
    <recommendedName>
        <fullName>Galactinol synthase 7</fullName>
        <shortName>AtGolS7</shortName>
        <shortName>GolS-7</shortName>
        <ecNumber>2.4.1.123</ecNumber>
    </recommendedName>
</protein>
<comment type="function">
    <text evidence="1">Galactinol synthase involved in the biosynthesis of raffinose family oligosaccharides (RFOs) that function as osmoprotectants. May promote plant stress tolerance (By similarity).</text>
</comment>
<comment type="catalytic activity">
    <reaction>
        <text>myo-inositol + UDP-alpha-D-galactose = alpha-D-galactosyl-(1-&gt;3)-1D-myo-inositol + UDP + H(+)</text>
        <dbReference type="Rhea" id="RHEA:12464"/>
        <dbReference type="ChEBI" id="CHEBI:15378"/>
        <dbReference type="ChEBI" id="CHEBI:17268"/>
        <dbReference type="ChEBI" id="CHEBI:17505"/>
        <dbReference type="ChEBI" id="CHEBI:58223"/>
        <dbReference type="ChEBI" id="CHEBI:66914"/>
        <dbReference type="EC" id="2.4.1.123"/>
    </reaction>
</comment>
<comment type="cofactor">
    <cofactor evidence="1">
        <name>a divalent metal cation</name>
        <dbReference type="ChEBI" id="CHEBI:60240"/>
    </cofactor>
</comment>
<comment type="subcellular location">
    <subcellularLocation>
        <location evidence="2">Cytoplasm</location>
    </subcellularLocation>
</comment>
<comment type="similarity">
    <text evidence="2">Belongs to the glycosyltransferase 8 family. Galactosyltransferase subfamily.</text>
</comment>
<comment type="sequence caution" evidence="2">
    <conflict type="erroneous gene model prediction">
        <sequence resource="EMBL-CDS" id="AAC24075"/>
    </conflict>
</comment>
<organism>
    <name type="scientific">Arabidopsis thaliana</name>
    <name type="common">Mouse-ear cress</name>
    <dbReference type="NCBI Taxonomy" id="3702"/>
    <lineage>
        <taxon>Eukaryota</taxon>
        <taxon>Viridiplantae</taxon>
        <taxon>Streptophyta</taxon>
        <taxon>Embryophyta</taxon>
        <taxon>Tracheophyta</taxon>
        <taxon>Spermatophyta</taxon>
        <taxon>Magnoliopsida</taxon>
        <taxon>eudicotyledons</taxon>
        <taxon>Gunneridae</taxon>
        <taxon>Pentapetalae</taxon>
        <taxon>rosids</taxon>
        <taxon>malvids</taxon>
        <taxon>Brassicales</taxon>
        <taxon>Brassicaceae</taxon>
        <taxon>Camelineae</taxon>
        <taxon>Arabidopsis</taxon>
    </lineage>
</organism>
<gene>
    <name type="primary">GOLS7</name>
    <name type="ordered locus">At1g60450</name>
    <name type="ORF">T13D8.32</name>
</gene>
<proteinExistence type="evidence at transcript level"/>
<reference key="1">
    <citation type="journal article" date="2000" name="Nature">
        <title>Sequence and analysis of chromosome 1 of the plant Arabidopsis thaliana.</title>
        <authorList>
            <person name="Theologis A."/>
            <person name="Ecker J.R."/>
            <person name="Palm C.J."/>
            <person name="Federspiel N.A."/>
            <person name="Kaul S."/>
            <person name="White O."/>
            <person name="Alonso J."/>
            <person name="Altafi H."/>
            <person name="Araujo R."/>
            <person name="Bowman C.L."/>
            <person name="Brooks S.Y."/>
            <person name="Buehler E."/>
            <person name="Chan A."/>
            <person name="Chao Q."/>
            <person name="Chen H."/>
            <person name="Cheuk R.F."/>
            <person name="Chin C.W."/>
            <person name="Chung M.K."/>
            <person name="Conn L."/>
            <person name="Conway A.B."/>
            <person name="Conway A.R."/>
            <person name="Creasy T.H."/>
            <person name="Dewar K."/>
            <person name="Dunn P."/>
            <person name="Etgu P."/>
            <person name="Feldblyum T.V."/>
            <person name="Feng J.-D."/>
            <person name="Fong B."/>
            <person name="Fujii C.Y."/>
            <person name="Gill J.E."/>
            <person name="Goldsmith A.D."/>
            <person name="Haas B."/>
            <person name="Hansen N.F."/>
            <person name="Hughes B."/>
            <person name="Huizar L."/>
            <person name="Hunter J.L."/>
            <person name="Jenkins J."/>
            <person name="Johnson-Hopson C."/>
            <person name="Khan S."/>
            <person name="Khaykin E."/>
            <person name="Kim C.J."/>
            <person name="Koo H.L."/>
            <person name="Kremenetskaia I."/>
            <person name="Kurtz D.B."/>
            <person name="Kwan A."/>
            <person name="Lam B."/>
            <person name="Langin-Hooper S."/>
            <person name="Lee A."/>
            <person name="Lee J.M."/>
            <person name="Lenz C.A."/>
            <person name="Li J.H."/>
            <person name="Li Y.-P."/>
            <person name="Lin X."/>
            <person name="Liu S.X."/>
            <person name="Liu Z.A."/>
            <person name="Luros J.S."/>
            <person name="Maiti R."/>
            <person name="Marziali A."/>
            <person name="Militscher J."/>
            <person name="Miranda M."/>
            <person name="Nguyen M."/>
            <person name="Nierman W.C."/>
            <person name="Osborne B.I."/>
            <person name="Pai G."/>
            <person name="Peterson J."/>
            <person name="Pham P.K."/>
            <person name="Rizzo M."/>
            <person name="Rooney T."/>
            <person name="Rowley D."/>
            <person name="Sakano H."/>
            <person name="Salzberg S.L."/>
            <person name="Schwartz J.R."/>
            <person name="Shinn P."/>
            <person name="Southwick A.M."/>
            <person name="Sun H."/>
            <person name="Tallon L.J."/>
            <person name="Tambunga G."/>
            <person name="Toriumi M.J."/>
            <person name="Town C.D."/>
            <person name="Utterback T."/>
            <person name="Van Aken S."/>
            <person name="Vaysberg M."/>
            <person name="Vysotskaia V.S."/>
            <person name="Walker M."/>
            <person name="Wu D."/>
            <person name="Yu G."/>
            <person name="Fraser C.M."/>
            <person name="Venter J.C."/>
            <person name="Davis R.W."/>
        </authorList>
    </citation>
    <scope>NUCLEOTIDE SEQUENCE [LARGE SCALE GENOMIC DNA]</scope>
    <source>
        <strain>cv. Columbia</strain>
    </source>
</reference>
<reference key="2">
    <citation type="journal article" date="2017" name="Plant J.">
        <title>Araport11: a complete reannotation of the Arabidopsis thaliana reference genome.</title>
        <authorList>
            <person name="Cheng C.Y."/>
            <person name="Krishnakumar V."/>
            <person name="Chan A.P."/>
            <person name="Thibaud-Nissen F."/>
            <person name="Schobel S."/>
            <person name="Town C.D."/>
        </authorList>
    </citation>
    <scope>GENOME REANNOTATION</scope>
    <source>
        <strain>cv. Columbia</strain>
    </source>
</reference>
<reference key="3">
    <citation type="submission" date="2005-05" db="EMBL/GenBank/DDBJ databases">
        <authorList>
            <person name="Underwood B.A."/>
            <person name="Xiao Y.-L."/>
            <person name="Moskal W.A. Jr."/>
            <person name="Monaghan E.L."/>
            <person name="Wang W."/>
            <person name="Redman J.C."/>
            <person name="Wu H.C."/>
            <person name="Utterback T."/>
            <person name="Town C.D."/>
        </authorList>
    </citation>
    <scope>NUCLEOTIDE SEQUENCE [LARGE SCALE MRNA]</scope>
    <source>
        <strain>cv. Columbia</strain>
    </source>
</reference>
<reference key="4">
    <citation type="journal article" date="2002" name="Plant J.">
        <title>Important roles of drought- and cold-inducible genes for galactinol synthase in stress tolerance in Arabidopsis thaliana.</title>
        <authorList>
            <person name="Taji T."/>
            <person name="Ohsumi C."/>
            <person name="Iuchi S."/>
            <person name="Seki M."/>
            <person name="Kasuga M."/>
            <person name="Kobayashi M."/>
            <person name="Yamaguchi-Shinozaki K."/>
            <person name="Shinozaki K."/>
        </authorList>
    </citation>
    <scope>GENE FAMILY</scope>
</reference>
<reference key="5">
    <citation type="journal article" date="2008" name="Plant Physiol.">
        <title>Galactinol and raffinose constitute a novel function to protect plants from oxidative damage.</title>
        <authorList>
            <person name="Nishizawa A."/>
            <person name="Yabuta Y."/>
            <person name="Shigeoka S."/>
        </authorList>
    </citation>
    <scope>GENE FAMILY</scope>
    <scope>NOMENCLATURE</scope>
</reference>
<dbReference type="EC" id="2.4.1.123"/>
<dbReference type="EMBL" id="AC004473">
    <property type="protein sequence ID" value="AAC24075.1"/>
    <property type="status" value="ALT_SEQ"/>
    <property type="molecule type" value="Genomic_DNA"/>
</dbReference>
<dbReference type="EMBL" id="CP002684">
    <property type="protein sequence ID" value="AEE33688.1"/>
    <property type="molecule type" value="Genomic_DNA"/>
</dbReference>
<dbReference type="EMBL" id="DQ056502">
    <property type="protein sequence ID" value="AAY78659.1"/>
    <property type="molecule type" value="mRNA"/>
</dbReference>
<dbReference type="PIR" id="T02295">
    <property type="entry name" value="T02295"/>
</dbReference>
<dbReference type="RefSeq" id="NP_176248.1">
    <property type="nucleotide sequence ID" value="NM_104732.2"/>
</dbReference>
<dbReference type="SMR" id="Q4PSY4"/>
<dbReference type="FunCoup" id="Q4PSY4">
    <property type="interactions" value="211"/>
</dbReference>
<dbReference type="STRING" id="3702.Q4PSY4"/>
<dbReference type="CAZy" id="GT8">
    <property type="family name" value="Glycosyltransferase Family 8"/>
</dbReference>
<dbReference type="PaxDb" id="3702-AT1G60450.1"/>
<dbReference type="ProteomicsDB" id="247019"/>
<dbReference type="EnsemblPlants" id="AT1G60450.1">
    <property type="protein sequence ID" value="AT1G60450.1"/>
    <property type="gene ID" value="AT1G60450"/>
</dbReference>
<dbReference type="GeneID" id="842340"/>
<dbReference type="Gramene" id="AT1G60450.1">
    <property type="protein sequence ID" value="AT1G60450.1"/>
    <property type="gene ID" value="AT1G60450"/>
</dbReference>
<dbReference type="KEGG" id="ath:AT1G60450"/>
<dbReference type="Araport" id="AT1G60450"/>
<dbReference type="TAIR" id="AT1G60450">
    <property type="gene designation" value="GOLS7"/>
</dbReference>
<dbReference type="eggNOG" id="KOG1950">
    <property type="taxonomic scope" value="Eukaryota"/>
</dbReference>
<dbReference type="HOGENOM" id="CLU_049943_3_0_1"/>
<dbReference type="InParanoid" id="Q4PSY4"/>
<dbReference type="OMA" id="EEPNMDR"/>
<dbReference type="PhylomeDB" id="Q4PSY4"/>
<dbReference type="PRO" id="PR:Q4PSY4"/>
<dbReference type="Proteomes" id="UP000006548">
    <property type="component" value="Chromosome 1"/>
</dbReference>
<dbReference type="ExpressionAtlas" id="Q4PSY4">
    <property type="expression patterns" value="baseline and differential"/>
</dbReference>
<dbReference type="GO" id="GO:0005737">
    <property type="term" value="C:cytoplasm"/>
    <property type="evidence" value="ECO:0007669"/>
    <property type="project" value="UniProtKB-SubCell"/>
</dbReference>
<dbReference type="GO" id="GO:0047216">
    <property type="term" value="F:inositol 3-alpha-galactosyltransferase activity"/>
    <property type="evidence" value="ECO:0000250"/>
    <property type="project" value="UniProtKB"/>
</dbReference>
<dbReference type="GO" id="GO:0046872">
    <property type="term" value="F:metal ion binding"/>
    <property type="evidence" value="ECO:0007669"/>
    <property type="project" value="UniProtKB-KW"/>
</dbReference>
<dbReference type="GO" id="GO:0006012">
    <property type="term" value="P:galactose metabolic process"/>
    <property type="evidence" value="ECO:0000250"/>
    <property type="project" value="UniProtKB"/>
</dbReference>
<dbReference type="CDD" id="cd02537">
    <property type="entry name" value="GT8_Glycogenin"/>
    <property type="match status" value="1"/>
</dbReference>
<dbReference type="FunFam" id="3.90.550.10:FF:000049">
    <property type="entry name" value="Hexosyltransferase"/>
    <property type="match status" value="1"/>
</dbReference>
<dbReference type="Gene3D" id="3.90.550.10">
    <property type="entry name" value="Spore Coat Polysaccharide Biosynthesis Protein SpsA, Chain A"/>
    <property type="match status" value="1"/>
</dbReference>
<dbReference type="InterPro" id="IPR002495">
    <property type="entry name" value="Glyco_trans_8"/>
</dbReference>
<dbReference type="InterPro" id="IPR050587">
    <property type="entry name" value="GNT1/Glycosyltrans_8"/>
</dbReference>
<dbReference type="InterPro" id="IPR029044">
    <property type="entry name" value="Nucleotide-diphossugar_trans"/>
</dbReference>
<dbReference type="PANTHER" id="PTHR11183">
    <property type="entry name" value="GLYCOGENIN SUBFAMILY MEMBER"/>
    <property type="match status" value="1"/>
</dbReference>
<dbReference type="Pfam" id="PF01501">
    <property type="entry name" value="Glyco_transf_8"/>
    <property type="match status" value="1"/>
</dbReference>
<dbReference type="SUPFAM" id="SSF53448">
    <property type="entry name" value="Nucleotide-diphospho-sugar transferases"/>
    <property type="match status" value="1"/>
</dbReference>
<evidence type="ECO:0000250" key="1"/>
<evidence type="ECO:0000305" key="2"/>